<reference key="1">
    <citation type="journal article" date="2013" name="Nature">
        <title>The zebrafish reference genome sequence and its relationship to the human genome.</title>
        <authorList>
            <person name="Howe K."/>
            <person name="Clark M.D."/>
            <person name="Torroja C.F."/>
            <person name="Torrance J."/>
            <person name="Berthelot C."/>
            <person name="Muffato M."/>
            <person name="Collins J.E."/>
            <person name="Humphray S."/>
            <person name="McLaren K."/>
            <person name="Matthews L."/>
            <person name="McLaren S."/>
            <person name="Sealy I."/>
            <person name="Caccamo M."/>
            <person name="Churcher C."/>
            <person name="Scott C."/>
            <person name="Barrett J.C."/>
            <person name="Koch R."/>
            <person name="Rauch G.J."/>
            <person name="White S."/>
            <person name="Chow W."/>
            <person name="Kilian B."/>
            <person name="Quintais L.T."/>
            <person name="Guerra-Assuncao J.A."/>
            <person name="Zhou Y."/>
            <person name="Gu Y."/>
            <person name="Yen J."/>
            <person name="Vogel J.H."/>
            <person name="Eyre T."/>
            <person name="Redmond S."/>
            <person name="Banerjee R."/>
            <person name="Chi J."/>
            <person name="Fu B."/>
            <person name="Langley E."/>
            <person name="Maguire S.F."/>
            <person name="Laird G.K."/>
            <person name="Lloyd D."/>
            <person name="Kenyon E."/>
            <person name="Donaldson S."/>
            <person name="Sehra H."/>
            <person name="Almeida-King J."/>
            <person name="Loveland J."/>
            <person name="Trevanion S."/>
            <person name="Jones M."/>
            <person name="Quail M."/>
            <person name="Willey D."/>
            <person name="Hunt A."/>
            <person name="Burton J."/>
            <person name="Sims S."/>
            <person name="McLay K."/>
            <person name="Plumb B."/>
            <person name="Davis J."/>
            <person name="Clee C."/>
            <person name="Oliver K."/>
            <person name="Clark R."/>
            <person name="Riddle C."/>
            <person name="Elliot D."/>
            <person name="Threadgold G."/>
            <person name="Harden G."/>
            <person name="Ware D."/>
            <person name="Begum S."/>
            <person name="Mortimore B."/>
            <person name="Kerry G."/>
            <person name="Heath P."/>
            <person name="Phillimore B."/>
            <person name="Tracey A."/>
            <person name="Corby N."/>
            <person name="Dunn M."/>
            <person name="Johnson C."/>
            <person name="Wood J."/>
            <person name="Clark S."/>
            <person name="Pelan S."/>
            <person name="Griffiths G."/>
            <person name="Smith M."/>
            <person name="Glithero R."/>
            <person name="Howden P."/>
            <person name="Barker N."/>
            <person name="Lloyd C."/>
            <person name="Stevens C."/>
            <person name="Harley J."/>
            <person name="Holt K."/>
            <person name="Panagiotidis G."/>
            <person name="Lovell J."/>
            <person name="Beasley H."/>
            <person name="Henderson C."/>
            <person name="Gordon D."/>
            <person name="Auger K."/>
            <person name="Wright D."/>
            <person name="Collins J."/>
            <person name="Raisen C."/>
            <person name="Dyer L."/>
            <person name="Leung K."/>
            <person name="Robertson L."/>
            <person name="Ambridge K."/>
            <person name="Leongamornlert D."/>
            <person name="McGuire S."/>
            <person name="Gilderthorp R."/>
            <person name="Griffiths C."/>
            <person name="Manthravadi D."/>
            <person name="Nichol S."/>
            <person name="Barker G."/>
            <person name="Whitehead S."/>
            <person name="Kay M."/>
            <person name="Brown J."/>
            <person name="Murnane C."/>
            <person name="Gray E."/>
            <person name="Humphries M."/>
            <person name="Sycamore N."/>
            <person name="Barker D."/>
            <person name="Saunders D."/>
            <person name="Wallis J."/>
            <person name="Babbage A."/>
            <person name="Hammond S."/>
            <person name="Mashreghi-Mohammadi M."/>
            <person name="Barr L."/>
            <person name="Martin S."/>
            <person name="Wray P."/>
            <person name="Ellington A."/>
            <person name="Matthews N."/>
            <person name="Ellwood M."/>
            <person name="Woodmansey R."/>
            <person name="Clark G."/>
            <person name="Cooper J."/>
            <person name="Tromans A."/>
            <person name="Grafham D."/>
            <person name="Skuce C."/>
            <person name="Pandian R."/>
            <person name="Andrews R."/>
            <person name="Harrison E."/>
            <person name="Kimberley A."/>
            <person name="Garnett J."/>
            <person name="Fosker N."/>
            <person name="Hall R."/>
            <person name="Garner P."/>
            <person name="Kelly D."/>
            <person name="Bird C."/>
            <person name="Palmer S."/>
            <person name="Gehring I."/>
            <person name="Berger A."/>
            <person name="Dooley C.M."/>
            <person name="Ersan-Urun Z."/>
            <person name="Eser C."/>
            <person name="Geiger H."/>
            <person name="Geisler M."/>
            <person name="Karotki L."/>
            <person name="Kirn A."/>
            <person name="Konantz J."/>
            <person name="Konantz M."/>
            <person name="Oberlander M."/>
            <person name="Rudolph-Geiger S."/>
            <person name="Teucke M."/>
            <person name="Lanz C."/>
            <person name="Raddatz G."/>
            <person name="Osoegawa K."/>
            <person name="Zhu B."/>
            <person name="Rapp A."/>
            <person name="Widaa S."/>
            <person name="Langford C."/>
            <person name="Yang F."/>
            <person name="Schuster S.C."/>
            <person name="Carter N.P."/>
            <person name="Harrow J."/>
            <person name="Ning Z."/>
            <person name="Herrero J."/>
            <person name="Searle S.M."/>
            <person name="Enright A."/>
            <person name="Geisler R."/>
            <person name="Plasterk R.H."/>
            <person name="Lee C."/>
            <person name="Westerfield M."/>
            <person name="de Jong P.J."/>
            <person name="Zon L.I."/>
            <person name="Postlethwait J.H."/>
            <person name="Nusslein-Volhard C."/>
            <person name="Hubbard T.J."/>
            <person name="Roest Crollius H."/>
            <person name="Rogers J."/>
            <person name="Stemple D.L."/>
        </authorList>
    </citation>
    <scope>NUCLEOTIDE SEQUENCE [LARGE SCALE GENOMIC DNA]</scope>
    <source>
        <strain>Tuebingen</strain>
    </source>
</reference>
<organism>
    <name type="scientific">Danio rerio</name>
    <name type="common">Zebrafish</name>
    <name type="synonym">Brachydanio rerio</name>
    <dbReference type="NCBI Taxonomy" id="7955"/>
    <lineage>
        <taxon>Eukaryota</taxon>
        <taxon>Metazoa</taxon>
        <taxon>Chordata</taxon>
        <taxon>Craniata</taxon>
        <taxon>Vertebrata</taxon>
        <taxon>Euteleostomi</taxon>
        <taxon>Actinopterygii</taxon>
        <taxon>Neopterygii</taxon>
        <taxon>Teleostei</taxon>
        <taxon>Ostariophysi</taxon>
        <taxon>Cypriniformes</taxon>
        <taxon>Danionidae</taxon>
        <taxon>Danioninae</taxon>
        <taxon>Danio</taxon>
    </lineage>
</organism>
<proteinExistence type="inferred from homology"/>
<sequence length="504" mass="55832">MNKAPAQMSRFNIAPDMDSSSTNSNEYTNYQDHASKVPLNGIQYSDVEAESQNFLSDHHLGKKKYEAEYSPGSASFGMSVFNLGNAIMGSGILGLSYAMANTGIAMFVILLVAVAIFSLYSVHLLLKTANEGGSLVYEQLGYKAFGIPGKLAASCSITMQNFGAMASYLYIVKYELPIVIRAFLDSNDNAWYTNGDYLVLIVTMSIILPLSLLKNLGYLGYTSGFSLLCMVFFLIVVIYKKFQIPCPLPENFINITVNVSQPPQTNNSTDEECCKPKYFIFNSQTVYAVPILTFAFVCHPAILPMYEELKDRSRRKMQNVANVSFLGMFIMYLLAALFGYLTFNEAVEPELLHTYSKVYNFDVVLLIVRLAVLTAVTLTVPVVLFPIRTSVNHLLGASKEFSWPRHICITVALLVCVNILVIFVPTIRDIFGFIGASAAAMLIFILPSAFYIKLVKKESMKSVQKIGATLFLIMGFLVMTGSMALIIMDWIHNALSSEEHTGGH</sequence>
<comment type="function">
    <text evidence="3">Symporter that cotransports neutral amino acids and sodium ions from the extracellular to the intracellular side of the cell membrane. The transport is pH-sensitive, Li(+)-intolerant, electrogenic, driven by the Na(+) electrochemical gradient and cotransports of neutral amino acids and sodium ions with a stoichiometry of 1:1.</text>
</comment>
<comment type="catalytic activity">
    <reaction evidence="3">
        <text>L-alanine(in) + Na(+)(in) = L-alanine(out) + Na(+)(out)</text>
        <dbReference type="Rhea" id="RHEA:29283"/>
        <dbReference type="ChEBI" id="CHEBI:29101"/>
        <dbReference type="ChEBI" id="CHEBI:57972"/>
    </reaction>
    <physiologicalReaction direction="right-to-left" evidence="3">
        <dbReference type="Rhea" id="RHEA:29285"/>
    </physiologicalReaction>
</comment>
<comment type="catalytic activity">
    <reaction evidence="3">
        <text>glycine(in) + Na(+)(in) = glycine(out) + Na(+)(out)</text>
        <dbReference type="Rhea" id="RHEA:68228"/>
        <dbReference type="ChEBI" id="CHEBI:29101"/>
        <dbReference type="ChEBI" id="CHEBI:57305"/>
    </reaction>
    <physiologicalReaction direction="right-to-left" evidence="3">
        <dbReference type="Rhea" id="RHEA:68230"/>
    </physiologicalReaction>
</comment>
<comment type="catalytic activity">
    <reaction evidence="3">
        <text>L-serine(in) + Na(+)(in) = L-serine(out) + Na(+)(out)</text>
        <dbReference type="Rhea" id="RHEA:29575"/>
        <dbReference type="ChEBI" id="CHEBI:29101"/>
        <dbReference type="ChEBI" id="CHEBI:33384"/>
    </reaction>
    <physiologicalReaction direction="right-to-left" evidence="3">
        <dbReference type="Rhea" id="RHEA:29577"/>
    </physiologicalReaction>
</comment>
<comment type="catalytic activity">
    <reaction evidence="3">
        <text>L-proline(in) + Na(+)(in) = L-proline(out) + Na(+)(out)</text>
        <dbReference type="Rhea" id="RHEA:28967"/>
        <dbReference type="ChEBI" id="CHEBI:29101"/>
        <dbReference type="ChEBI" id="CHEBI:60039"/>
    </reaction>
    <physiologicalReaction direction="right-to-left" evidence="3">
        <dbReference type="Rhea" id="RHEA:28969"/>
    </physiologicalReaction>
</comment>
<comment type="catalytic activity">
    <reaction evidence="3">
        <text>L-methionine(in) + Na(+)(in) = L-methionine(out) + Na(+)(out)</text>
        <dbReference type="Rhea" id="RHEA:68240"/>
        <dbReference type="ChEBI" id="CHEBI:29101"/>
        <dbReference type="ChEBI" id="CHEBI:57844"/>
    </reaction>
    <physiologicalReaction direction="right-to-left" evidence="3">
        <dbReference type="Rhea" id="RHEA:68242"/>
    </physiologicalReaction>
</comment>
<comment type="catalytic activity">
    <reaction evidence="3">
        <text>L-histidine(in) + Na(+)(in) = L-histidine(out) + Na(+)(out)</text>
        <dbReference type="Rhea" id="RHEA:71583"/>
        <dbReference type="ChEBI" id="CHEBI:29101"/>
        <dbReference type="ChEBI" id="CHEBI:57595"/>
    </reaction>
    <physiologicalReaction direction="right-to-left" evidence="3">
        <dbReference type="Rhea" id="RHEA:71585"/>
    </physiologicalReaction>
</comment>
<comment type="catalytic activity">
    <reaction evidence="3">
        <text>L-asparagine(in) + Na(+)(in) = L-asparagine(out) + Na(+)(out)</text>
        <dbReference type="Rhea" id="RHEA:71383"/>
        <dbReference type="ChEBI" id="CHEBI:29101"/>
        <dbReference type="ChEBI" id="CHEBI:58048"/>
    </reaction>
    <physiologicalReaction direction="right-to-left" evidence="3">
        <dbReference type="Rhea" id="RHEA:71385"/>
    </physiologicalReaction>
</comment>
<comment type="catalytic activity">
    <reaction evidence="3">
        <text>L-glutamine(in) + Na(+)(in) = L-glutamine(out) + Na(+)(out)</text>
        <dbReference type="Rhea" id="RHEA:68236"/>
        <dbReference type="ChEBI" id="CHEBI:29101"/>
        <dbReference type="ChEBI" id="CHEBI:58359"/>
    </reaction>
    <physiologicalReaction direction="right-to-left" evidence="3">
        <dbReference type="Rhea" id="RHEA:68238"/>
    </physiologicalReaction>
</comment>
<comment type="catalytic activity">
    <reaction evidence="3">
        <text>L-threonine(in) + Na(+)(in) = L-threonine(out) + Na(+)(out)</text>
        <dbReference type="Rhea" id="RHEA:69999"/>
        <dbReference type="ChEBI" id="CHEBI:29101"/>
        <dbReference type="ChEBI" id="CHEBI:57926"/>
    </reaction>
    <physiologicalReaction direction="right-to-left" evidence="3">
        <dbReference type="Rhea" id="RHEA:70001"/>
    </physiologicalReaction>
</comment>
<comment type="catalytic activity">
    <reaction evidence="3">
        <text>L-leucine(in) + Na(+)(in) = L-leucine(out) + Na(+)(out)</text>
        <dbReference type="Rhea" id="RHEA:29263"/>
        <dbReference type="ChEBI" id="CHEBI:29101"/>
        <dbReference type="ChEBI" id="CHEBI:57427"/>
    </reaction>
    <physiologicalReaction direction="right-to-left" evidence="3">
        <dbReference type="Rhea" id="RHEA:29265"/>
    </physiologicalReaction>
</comment>
<comment type="catalytic activity">
    <reaction evidence="3">
        <text>L-phenylalanine(in) + Na(+)(in) = L-phenylalanine(out) + Na(+)(out)</text>
        <dbReference type="Rhea" id="RHEA:68244"/>
        <dbReference type="ChEBI" id="CHEBI:29101"/>
        <dbReference type="ChEBI" id="CHEBI:58095"/>
    </reaction>
    <physiologicalReaction direction="right-to-left" evidence="3">
        <dbReference type="Rhea" id="RHEA:68246"/>
    </physiologicalReaction>
</comment>
<comment type="activity regulation">
    <text evidence="3">Inhibited by N-methyl-D-glucamine. Inhibited by choline. Allosteric regulation of sodium ions binding by pH.</text>
</comment>
<comment type="subcellular location">
    <subcellularLocation>
        <location evidence="3">Cell membrane</location>
        <topology evidence="3">Multi-pass membrane protein</topology>
    </subcellularLocation>
</comment>
<comment type="domain">
    <text evidence="3">The extracellular C-terminal domain controls the voltage dependence for amino acid transports activity.</text>
</comment>
<comment type="similarity">
    <text evidence="7">Belongs to the amino acid/polyamine transporter 2 family.</text>
</comment>
<feature type="chain" id="PRO_0000311374" description="Sodium-coupled neutral amino acid symporter 2">
    <location>
        <begin position="1"/>
        <end position="504"/>
    </location>
</feature>
<feature type="topological domain" description="Cytoplasmic" evidence="3 4">
    <location>
        <begin position="1"/>
        <end position="79"/>
    </location>
</feature>
<feature type="transmembrane region" description="Helical" evidence="4">
    <location>
        <begin position="80"/>
        <end position="99"/>
    </location>
</feature>
<feature type="topological domain" description="Extracellular" evidence="3 4">
    <location>
        <begin position="100"/>
        <end position="105"/>
    </location>
</feature>
<feature type="transmembrane region" description="Helical" evidence="3 4">
    <location>
        <begin position="106"/>
        <end position="126"/>
    </location>
</feature>
<feature type="topological domain" description="Cytoplasmic" evidence="3 4">
    <location>
        <begin position="127"/>
        <end position="161"/>
    </location>
</feature>
<feature type="transmembrane region" description="Helical" evidence="3 4">
    <location>
        <begin position="162"/>
        <end position="180"/>
    </location>
</feature>
<feature type="topological domain" description="Extracellular" evidence="4">
    <location>
        <begin position="181"/>
        <end position="189"/>
    </location>
</feature>
<feature type="transmembrane region" description="Helical" evidence="3 4">
    <location>
        <begin position="190"/>
        <end position="210"/>
    </location>
</feature>
<feature type="topological domain" description="Cytoplasmic" evidence="3 4">
    <location>
        <begin position="211"/>
        <end position="218"/>
    </location>
</feature>
<feature type="transmembrane region" description="Helical" evidence="3 4">
    <location>
        <begin position="219"/>
        <end position="239"/>
    </location>
</feature>
<feature type="topological domain" description="Extracellular" evidence="3 4">
    <location>
        <begin position="240"/>
        <end position="285"/>
    </location>
</feature>
<feature type="transmembrane region" description="Helical" evidence="3 4">
    <location>
        <begin position="286"/>
        <end position="306"/>
    </location>
</feature>
<feature type="topological domain" description="Cytoplasmic" evidence="3 4">
    <location>
        <begin position="307"/>
        <end position="322"/>
    </location>
</feature>
<feature type="transmembrane region" description="Helical" evidence="4">
    <location>
        <begin position="323"/>
        <end position="343"/>
    </location>
</feature>
<feature type="topological domain" description="Extracellular" evidence="3 4">
    <location>
        <begin position="344"/>
        <end position="364"/>
    </location>
</feature>
<feature type="transmembrane region" description="Helical" evidence="4">
    <location>
        <begin position="365"/>
        <end position="385"/>
    </location>
</feature>
<feature type="topological domain" description="Cytoplasmic" evidence="3 4">
    <location>
        <begin position="386"/>
        <end position="406"/>
    </location>
</feature>
<feature type="transmembrane region" description="Helical" evidence="4">
    <location>
        <begin position="407"/>
        <end position="427"/>
    </location>
</feature>
<feature type="topological domain" description="Extracellular" evidence="3 4">
    <location>
        <begin position="428"/>
        <end position="429"/>
    </location>
</feature>
<feature type="transmembrane region" description="Helical" evidence="3 4">
    <location>
        <begin position="430"/>
        <end position="450"/>
    </location>
</feature>
<feature type="topological domain" description="Cytoplasmic" evidence="4">
    <location>
        <begin position="451"/>
        <end position="465"/>
    </location>
</feature>
<feature type="transmembrane region" description="Helical" evidence="3 4">
    <location>
        <begin position="466"/>
        <end position="488"/>
    </location>
</feature>
<feature type="topological domain" description="Extracellular" evidence="3 4">
    <location>
        <begin position="489"/>
        <end position="504"/>
    </location>
</feature>
<feature type="region of interest" description="Regulates protein turnover upon amino acid deprivation" evidence="1">
    <location>
        <begin position="1"/>
        <end position="99"/>
    </location>
</feature>
<feature type="region of interest" description="Disordered" evidence="6">
    <location>
        <begin position="1"/>
        <end position="28"/>
    </location>
</feature>
<feature type="compositionally biased region" description="Low complexity" evidence="6">
    <location>
        <begin position="19"/>
        <end position="28"/>
    </location>
</feature>
<feature type="binding site" evidence="3">
    <location>
        <position position="85"/>
    </location>
    <ligand>
        <name>Na(+)</name>
        <dbReference type="ChEBI" id="CHEBI:29101"/>
    </ligand>
</feature>
<feature type="binding site" evidence="3">
    <location>
        <position position="379"/>
    </location>
    <ligand>
        <name>Na(+)</name>
        <dbReference type="ChEBI" id="CHEBI:29101"/>
    </ligand>
</feature>
<feature type="glycosylation site" description="N-linked (GlcNAc...) asparagine" evidence="4">
    <location>
        <position position="254"/>
    </location>
</feature>
<feature type="glycosylation site" description="N-linked (GlcNAc...) asparagine" evidence="4">
    <location>
        <position position="258"/>
    </location>
</feature>
<feature type="disulfide bond" evidence="5">
    <location>
        <begin position="246"/>
        <end position="274"/>
    </location>
</feature>
<keyword id="KW-0029">Amino-acid transport</keyword>
<keyword id="KW-1003">Cell membrane</keyword>
<keyword id="KW-1015">Disulfide bond</keyword>
<keyword id="KW-0325">Glycoprotein</keyword>
<keyword id="KW-0406">Ion transport</keyword>
<keyword id="KW-0472">Membrane</keyword>
<keyword id="KW-1185">Reference proteome</keyword>
<keyword id="KW-0915">Sodium</keyword>
<keyword id="KW-0739">Sodium transport</keyword>
<keyword id="KW-0769">Symport</keyword>
<keyword id="KW-0812">Transmembrane</keyword>
<keyword id="KW-1133">Transmembrane helix</keyword>
<keyword id="KW-0813">Transport</keyword>
<dbReference type="EMBL" id="AL929171">
    <property type="protein sequence ID" value="CAI11588.1"/>
    <property type="molecule type" value="Genomic_DNA"/>
</dbReference>
<dbReference type="RefSeq" id="NP_001038569.1">
    <property type="nucleotide sequence ID" value="NM_001045104.1"/>
</dbReference>
<dbReference type="SMR" id="Q5SPB1"/>
<dbReference type="FunCoup" id="Q5SPB1">
    <property type="interactions" value="328"/>
</dbReference>
<dbReference type="STRING" id="7955.ENSDARP00000118404"/>
<dbReference type="GlyCosmos" id="Q5SPB1">
    <property type="glycosylation" value="2 sites, No reported glycans"/>
</dbReference>
<dbReference type="PaxDb" id="7955-ENSDARP00000118404"/>
<dbReference type="Ensembl" id="ENSDART00000146779">
    <property type="protein sequence ID" value="ENSDARP00000118404"/>
    <property type="gene ID" value="ENSDARG00000045886"/>
</dbReference>
<dbReference type="GeneID" id="566537"/>
<dbReference type="KEGG" id="dre:566537"/>
<dbReference type="AGR" id="ZFIN:ZDB-GENE-030131-9659"/>
<dbReference type="CTD" id="54407"/>
<dbReference type="ZFIN" id="ZDB-GENE-030131-9659">
    <property type="gene designation" value="slc38a2"/>
</dbReference>
<dbReference type="eggNOG" id="KOG1305">
    <property type="taxonomic scope" value="Eukaryota"/>
</dbReference>
<dbReference type="HOGENOM" id="CLU_009020_0_1_1"/>
<dbReference type="InParanoid" id="Q5SPB1"/>
<dbReference type="OMA" id="DSIHHQR"/>
<dbReference type="OrthoDB" id="655540at2759"/>
<dbReference type="PhylomeDB" id="Q5SPB1"/>
<dbReference type="TreeFam" id="TF328787"/>
<dbReference type="Reactome" id="R-DRE-210500">
    <property type="pathway name" value="Glutamate Neurotransmitter Release Cycle"/>
</dbReference>
<dbReference type="Reactome" id="R-DRE-352230">
    <property type="pathway name" value="Amino acid transport across the plasma membrane"/>
</dbReference>
<dbReference type="PRO" id="PR:Q5SPB1"/>
<dbReference type="Proteomes" id="UP000000437">
    <property type="component" value="Chromosome 4"/>
</dbReference>
<dbReference type="Bgee" id="ENSDARG00000045886">
    <property type="expression patterns" value="Expressed in muscle tissue and 30 other cell types or tissues"/>
</dbReference>
<dbReference type="GO" id="GO:0005886">
    <property type="term" value="C:plasma membrane"/>
    <property type="evidence" value="ECO:0000250"/>
    <property type="project" value="UniProtKB"/>
</dbReference>
<dbReference type="GO" id="GO:0015172">
    <property type="term" value="F:acidic amino acid transmembrane transporter activity"/>
    <property type="evidence" value="ECO:0000250"/>
    <property type="project" value="UniProtKB"/>
</dbReference>
<dbReference type="GO" id="GO:0015655">
    <property type="term" value="F:alanine:sodium symporter activity"/>
    <property type="evidence" value="ECO:0000250"/>
    <property type="project" value="UniProtKB"/>
</dbReference>
<dbReference type="GO" id="GO:0015171">
    <property type="term" value="F:amino acid transmembrane transporter activity"/>
    <property type="evidence" value="ECO:0000250"/>
    <property type="project" value="UniProtKB"/>
</dbReference>
<dbReference type="GO" id="GO:0005283">
    <property type="term" value="F:amino acid:sodium symporter activity"/>
    <property type="evidence" value="ECO:0000250"/>
    <property type="project" value="UniProtKB"/>
</dbReference>
<dbReference type="GO" id="GO:0015186">
    <property type="term" value="F:L-glutamine transmembrane transporter activity"/>
    <property type="evidence" value="ECO:0000250"/>
    <property type="project" value="UniProtKB"/>
</dbReference>
<dbReference type="GO" id="GO:0015175">
    <property type="term" value="F:neutral L-amino acid transmembrane transporter activity"/>
    <property type="evidence" value="ECO:0000250"/>
    <property type="project" value="UniProtKB"/>
</dbReference>
<dbReference type="GO" id="GO:0005295">
    <property type="term" value="F:neutral L-amino acid:sodium symporter activity"/>
    <property type="evidence" value="ECO:0000250"/>
    <property type="project" value="UniProtKB"/>
</dbReference>
<dbReference type="GO" id="GO:0005298">
    <property type="term" value="F:proline:sodium symporter activity"/>
    <property type="evidence" value="ECO:0000250"/>
    <property type="project" value="UniProtKB"/>
</dbReference>
<dbReference type="GO" id="GO:0032328">
    <property type="term" value="P:alanine transport"/>
    <property type="evidence" value="ECO:0000250"/>
    <property type="project" value="UniProtKB"/>
</dbReference>
<dbReference type="GO" id="GO:0043090">
    <property type="term" value="P:amino acid import"/>
    <property type="evidence" value="ECO:0000250"/>
    <property type="project" value="UniProtKB"/>
</dbReference>
<dbReference type="GO" id="GO:0003333">
    <property type="term" value="P:amino acid transmembrane transport"/>
    <property type="evidence" value="ECO:0000318"/>
    <property type="project" value="GO_Central"/>
</dbReference>
<dbReference type="GO" id="GO:0006865">
    <property type="term" value="P:amino acid transport"/>
    <property type="evidence" value="ECO:0000250"/>
    <property type="project" value="UniProtKB"/>
</dbReference>
<dbReference type="GO" id="GO:0006868">
    <property type="term" value="P:glutamine transport"/>
    <property type="evidence" value="ECO:0000318"/>
    <property type="project" value="GO_Central"/>
</dbReference>
<dbReference type="GO" id="GO:1903803">
    <property type="term" value="P:L-glutamine import across plasma membrane"/>
    <property type="evidence" value="ECO:0000250"/>
    <property type="project" value="UniProtKB"/>
</dbReference>
<dbReference type="GO" id="GO:1904271">
    <property type="term" value="P:L-proline import across plasma membrane"/>
    <property type="evidence" value="ECO:0000250"/>
    <property type="project" value="UniProtKB"/>
</dbReference>
<dbReference type="GO" id="GO:1903812">
    <property type="term" value="P:L-serine import across plasma membrane"/>
    <property type="evidence" value="ECO:0000250"/>
    <property type="project" value="UniProtKB"/>
</dbReference>
<dbReference type="GO" id="GO:0015804">
    <property type="term" value="P:neutral amino acid transport"/>
    <property type="evidence" value="ECO:0000250"/>
    <property type="project" value="UniProtKB"/>
</dbReference>
<dbReference type="GO" id="GO:0015824">
    <property type="term" value="P:proline transport"/>
    <property type="evidence" value="ECO:0000250"/>
    <property type="project" value="UniProtKB"/>
</dbReference>
<dbReference type="GO" id="GO:1903294">
    <property type="term" value="P:regulation of glutamate secretion, neurotransmission"/>
    <property type="evidence" value="ECO:0000250"/>
    <property type="project" value="UniProtKB"/>
</dbReference>
<dbReference type="InterPro" id="IPR013057">
    <property type="entry name" value="AA_transpt_TM"/>
</dbReference>
<dbReference type="PANTHER" id="PTHR22950">
    <property type="entry name" value="AMINO ACID TRANSPORTER"/>
    <property type="match status" value="1"/>
</dbReference>
<dbReference type="PANTHER" id="PTHR22950:SF207">
    <property type="entry name" value="SODIUM-COUPLED NEUTRAL AMINO ACID SYMPORTER 2"/>
    <property type="match status" value="1"/>
</dbReference>
<dbReference type="Pfam" id="PF01490">
    <property type="entry name" value="Aa_trans"/>
    <property type="match status" value="1"/>
</dbReference>
<accession>Q5SPB1</accession>
<protein>
    <recommendedName>
        <fullName evidence="2">Sodium-coupled neutral amino acid symporter 2</fullName>
    </recommendedName>
    <alternativeName>
        <fullName>Amino acid transporter A2</fullName>
    </alternativeName>
    <alternativeName>
        <fullName>Solute carrier family 38 member 2</fullName>
    </alternativeName>
    <alternativeName>
        <fullName>System A amino acid transporter 2</fullName>
    </alternativeName>
    <alternativeName>
        <fullName>System A transporter 1</fullName>
    </alternativeName>
    <alternativeName>
        <fullName>System N amino acid transporter 2</fullName>
    </alternativeName>
</protein>
<gene>
    <name evidence="2" type="primary">slc38a2</name>
    <name type="synonym">snat2</name>
    <name type="ORF">si:ch211-132p20.4</name>
</gene>
<evidence type="ECO:0000250" key="1"/>
<evidence type="ECO:0000250" key="2">
    <source>
        <dbReference type="UniProtKB" id="Q96QD8"/>
    </source>
</evidence>
<evidence type="ECO:0000250" key="3">
    <source>
        <dbReference type="UniProtKB" id="Q9JHE5"/>
    </source>
</evidence>
<evidence type="ECO:0000255" key="4"/>
<evidence type="ECO:0000255" key="5">
    <source>
        <dbReference type="PROSITE-ProRule" id="PRU00114"/>
    </source>
</evidence>
<evidence type="ECO:0000256" key="6">
    <source>
        <dbReference type="SAM" id="MobiDB-lite"/>
    </source>
</evidence>
<evidence type="ECO:0000305" key="7"/>
<name>S38A2_DANRE</name>